<name>Y7B2_ENCCU</name>
<keyword id="KW-1185">Reference proteome</keyword>
<organism>
    <name type="scientific">Encephalitozoon cuniculi (strain GB-M1)</name>
    <name type="common">Microsporidian parasite</name>
    <dbReference type="NCBI Taxonomy" id="284813"/>
    <lineage>
        <taxon>Eukaryota</taxon>
        <taxon>Fungi</taxon>
        <taxon>Fungi incertae sedis</taxon>
        <taxon>Microsporidia</taxon>
        <taxon>Unikaryonidae</taxon>
        <taxon>Encephalitozoon</taxon>
    </lineage>
</organism>
<evidence type="ECO:0000269" key="1">
    <source>
    </source>
</evidence>
<proteinExistence type="evidence at protein level"/>
<dbReference type="EMBL" id="AL590447">
    <property type="protein sequence ID" value="CAD25645.1"/>
    <property type="molecule type" value="Genomic_DNA"/>
</dbReference>
<dbReference type="RefSeq" id="NP_586041.1">
    <property type="nucleotide sequence ID" value="NM_001041663.1"/>
</dbReference>
<dbReference type="GeneID" id="859471"/>
<dbReference type="KEGG" id="ecu:ECU07_1120"/>
<dbReference type="VEuPathDB" id="MicrosporidiaDB:ECU07_1120"/>
<dbReference type="HOGENOM" id="CLU_600058_0_0_1"/>
<dbReference type="InParanoid" id="Q8SUY5"/>
<dbReference type="OrthoDB" id="2196200at2759"/>
<dbReference type="Proteomes" id="UP000000819">
    <property type="component" value="Chromosome VII"/>
</dbReference>
<feature type="chain" id="PRO_0000382778" description="Uncharacterized protein ECU07_1120">
    <location>
        <begin position="1"/>
        <end position="420"/>
    </location>
</feature>
<protein>
    <recommendedName>
        <fullName>Uncharacterized protein ECU07_1120</fullName>
    </recommendedName>
</protein>
<accession>Q8SUY5</accession>
<comment type="developmental stage">
    <text evidence="1">Expressed in late sporogonial stages.</text>
</comment>
<reference key="1">
    <citation type="journal article" date="2001" name="Nature">
        <title>Genome sequence and gene compaction of the eukaryote parasite Encephalitozoon cuniculi.</title>
        <authorList>
            <person name="Katinka M.D."/>
            <person name="Duprat S."/>
            <person name="Cornillot E."/>
            <person name="Metenier G."/>
            <person name="Thomarat F."/>
            <person name="Prensier G."/>
            <person name="Barbe V."/>
            <person name="Peyretaillade E."/>
            <person name="Brottier P."/>
            <person name="Wincker P."/>
            <person name="Delbac F."/>
            <person name="El Alaoui H."/>
            <person name="Peyret P."/>
            <person name="Saurin W."/>
            <person name="Gouy M."/>
            <person name="Weissenbach J."/>
            <person name="Vivares C.P."/>
        </authorList>
    </citation>
    <scope>NUCLEOTIDE SEQUENCE [LARGE SCALE GENOMIC DNA]</scope>
    <source>
        <strain>GB-M1</strain>
    </source>
</reference>
<reference key="2">
    <citation type="journal article" date="2006" name="Proteomics">
        <title>Proteomic analysis of the eukaryotic parasite Encephalitozoon cuniculi (microsporidia): a reference map for proteins expressed in late sporogonial stages.</title>
        <authorList>
            <person name="Brosson D."/>
            <person name="Kuhn L."/>
            <person name="Delbac F."/>
            <person name="Garin J."/>
            <person name="Vivares C.P."/>
            <person name="Texier C."/>
        </authorList>
    </citation>
    <scope>IDENTIFICATION BY MASS SPECTROMETRY [LARGE SCALE ANALYSIS]</scope>
    <scope>DEVELOPMENTAL STAGE</scope>
</reference>
<gene>
    <name type="ordered locus">ECU07_1120</name>
</gene>
<sequence>MRCMEEYLFDRSKLAARPLGKVLAEDYCFDLEREEASGFRVSKGFLWCGECRAMEVDEKTVYLHGSKLFMVSDSLKVYELPSALPSSGLVVRGDDCVYIEKNGRRWTFPDMPEDEVLDGTFLGDRVWIWHAVNTEGRRHLSRSTYLLETEKAVRCEGKMYARDGETILQVQDILVRKDAEICNPTRVWSRGAGDGMVVITTTPDTVWMEYGGYVSSKPCCKEIYGMDGCRLLGLSSCVDVSDLYLTLRLFTDIPVEVEAVEKIEEYLFKLFVFTDRGGRLVEWLVESGMDRQKEMILCRLYRKVDDKGKRVLERWMQGIQSLDALKLIIIYFPEKLERYIKMCIEEKREFEIEEVVEHYQGSDKIEEICLVLLKNSCLHLFSLCMPEYKGRFGDVALVERYNMESQRNMWKTQRIHGDLI</sequence>